<comment type="catalytic activity">
    <reaction evidence="1">
        <text>2 reduced [2Fe-2S]-[ferredoxin] + NADP(+) + H(+) = 2 oxidized [2Fe-2S]-[ferredoxin] + NADPH</text>
        <dbReference type="Rhea" id="RHEA:20125"/>
        <dbReference type="Rhea" id="RHEA-COMP:10000"/>
        <dbReference type="Rhea" id="RHEA-COMP:10001"/>
        <dbReference type="ChEBI" id="CHEBI:15378"/>
        <dbReference type="ChEBI" id="CHEBI:33737"/>
        <dbReference type="ChEBI" id="CHEBI:33738"/>
        <dbReference type="ChEBI" id="CHEBI:57783"/>
        <dbReference type="ChEBI" id="CHEBI:58349"/>
        <dbReference type="EC" id="1.18.1.2"/>
    </reaction>
</comment>
<comment type="cofactor">
    <cofactor evidence="1">
        <name>FAD</name>
        <dbReference type="ChEBI" id="CHEBI:57692"/>
    </cofactor>
    <text evidence="1">Binds 1 FAD per subunit.</text>
</comment>
<comment type="subunit">
    <text evidence="1">Homodimer.</text>
</comment>
<comment type="similarity">
    <text evidence="1">Belongs to the ferredoxin--NADP reductase type 2 family.</text>
</comment>
<comment type="sequence caution" evidence="2">
    <conflict type="erroneous initiation">
        <sequence resource="EMBL-CDS" id="ABQ04539"/>
    </conflict>
</comment>
<protein>
    <recommendedName>
        <fullName evidence="1">Ferredoxin--NADP reductase</fullName>
        <shortName evidence="1">FNR</shortName>
        <shortName evidence="1">Fd-NADP(+) reductase</shortName>
        <ecNumber evidence="1">1.18.1.2</ecNumber>
    </recommendedName>
</protein>
<sequence>MIKTDILIIGAGPTGLFAVFEAGLLKLKCHILDALPQPGGQLSELYPKKPIYDIPGFPEVLAGDLVDGLMEQIKQFEPGFTLGERAETVEKQEDGTFIVTSNKGTKFHAPVIAIAGGLGSFEPRKPLIEDIEFYEDKGVKYFIKNPEKFRDKRVVIAGGGDSALDWSIFLANVASEVTLIHRRNEFRGALDSVEKVQELKSAGKIKLITPAEVIGINGAEHVESLDIEENGAHRKIECDYFIPLFGLTPKLGPIGDWGLEIEKNAIKVNNALDYQTNIPGIFAIGDVNTYPGKLKLILCGFHEATLMCQAAYGIINPGKKYVLKYTTVSGVDGFDGTRKEAPKAVVKAIV</sequence>
<organism>
    <name type="scientific">Flavobacterium johnsoniae (strain ATCC 17061 / DSM 2064 / JCM 8514 / BCRC 14874 / CCUG 350202 / NBRC 14942 / NCIMB 11054 / UW101)</name>
    <name type="common">Cytophaga johnsonae</name>
    <dbReference type="NCBI Taxonomy" id="376686"/>
    <lineage>
        <taxon>Bacteria</taxon>
        <taxon>Pseudomonadati</taxon>
        <taxon>Bacteroidota</taxon>
        <taxon>Flavobacteriia</taxon>
        <taxon>Flavobacteriales</taxon>
        <taxon>Flavobacteriaceae</taxon>
        <taxon>Flavobacterium</taxon>
    </lineage>
</organism>
<proteinExistence type="inferred from homology"/>
<dbReference type="EC" id="1.18.1.2" evidence="1"/>
<dbReference type="EMBL" id="CP000685">
    <property type="protein sequence ID" value="ABQ04539.1"/>
    <property type="status" value="ALT_INIT"/>
    <property type="molecule type" value="Genomic_DNA"/>
</dbReference>
<dbReference type="RefSeq" id="WP_044047573.1">
    <property type="nucleotide sequence ID" value="NC_009441.1"/>
</dbReference>
<dbReference type="SMR" id="A5FJT9"/>
<dbReference type="STRING" id="376686.Fjoh_1507"/>
<dbReference type="KEGG" id="fjo:Fjoh_1507"/>
<dbReference type="eggNOG" id="COG0492">
    <property type="taxonomic scope" value="Bacteria"/>
</dbReference>
<dbReference type="HOGENOM" id="CLU_031864_5_5_10"/>
<dbReference type="OrthoDB" id="9806179at2"/>
<dbReference type="Proteomes" id="UP000006694">
    <property type="component" value="Chromosome"/>
</dbReference>
<dbReference type="GO" id="GO:0004324">
    <property type="term" value="F:ferredoxin-NADP+ reductase activity"/>
    <property type="evidence" value="ECO:0007669"/>
    <property type="project" value="UniProtKB-UniRule"/>
</dbReference>
<dbReference type="GO" id="GO:0050660">
    <property type="term" value="F:flavin adenine dinucleotide binding"/>
    <property type="evidence" value="ECO:0007669"/>
    <property type="project" value="UniProtKB-UniRule"/>
</dbReference>
<dbReference type="GO" id="GO:0050661">
    <property type="term" value="F:NADP binding"/>
    <property type="evidence" value="ECO:0007669"/>
    <property type="project" value="UniProtKB-UniRule"/>
</dbReference>
<dbReference type="Gene3D" id="3.50.50.60">
    <property type="entry name" value="FAD/NAD(P)-binding domain"/>
    <property type="match status" value="2"/>
</dbReference>
<dbReference type="HAMAP" id="MF_01685">
    <property type="entry name" value="FENR2"/>
    <property type="match status" value="1"/>
</dbReference>
<dbReference type="InterPro" id="IPR036188">
    <property type="entry name" value="FAD/NAD-bd_sf"/>
</dbReference>
<dbReference type="InterPro" id="IPR023753">
    <property type="entry name" value="FAD/NAD-binding_dom"/>
</dbReference>
<dbReference type="InterPro" id="IPR022890">
    <property type="entry name" value="Fd--NADP_Rdtase_type_2"/>
</dbReference>
<dbReference type="InterPro" id="IPR050097">
    <property type="entry name" value="Ferredoxin-NADP_redctase_2"/>
</dbReference>
<dbReference type="PANTHER" id="PTHR48105">
    <property type="entry name" value="THIOREDOXIN REDUCTASE 1-RELATED-RELATED"/>
    <property type="match status" value="1"/>
</dbReference>
<dbReference type="Pfam" id="PF07992">
    <property type="entry name" value="Pyr_redox_2"/>
    <property type="match status" value="1"/>
</dbReference>
<dbReference type="PRINTS" id="PR00368">
    <property type="entry name" value="FADPNR"/>
</dbReference>
<dbReference type="PRINTS" id="PR00469">
    <property type="entry name" value="PNDRDTASEII"/>
</dbReference>
<dbReference type="SUPFAM" id="SSF51905">
    <property type="entry name" value="FAD/NAD(P)-binding domain"/>
    <property type="match status" value="1"/>
</dbReference>
<reference key="1">
    <citation type="journal article" date="2009" name="Appl. Environ. Microbiol.">
        <title>Novel features of the polysaccharide-digesting gliding bacterium Flavobacterium johnsoniae as revealed by genome sequence analysis.</title>
        <authorList>
            <person name="McBride M.J."/>
            <person name="Xie G."/>
            <person name="Martens E.C."/>
            <person name="Lapidus A."/>
            <person name="Henrissat B."/>
            <person name="Rhodes R.G."/>
            <person name="Goltsman E."/>
            <person name="Wang W."/>
            <person name="Xu J."/>
            <person name="Hunnicutt D.W."/>
            <person name="Staroscik A.M."/>
            <person name="Hoover T.R."/>
            <person name="Cheng Y.Q."/>
            <person name="Stein J.L."/>
        </authorList>
    </citation>
    <scope>NUCLEOTIDE SEQUENCE [LARGE SCALE GENOMIC DNA]</scope>
    <source>
        <strain>ATCC 17061 / DSM 2064 / JCM 8514 / BCRC 14874 / CCUG 350202 / NBRC 14942 / NCIMB 11054 / UW101</strain>
    </source>
</reference>
<name>FENR_FLAJ1</name>
<feature type="chain" id="PRO_0000364836" description="Ferredoxin--NADP reductase">
    <location>
        <begin position="1"/>
        <end position="350"/>
    </location>
</feature>
<feature type="binding site" evidence="1">
    <location>
        <position position="14"/>
    </location>
    <ligand>
        <name>FAD</name>
        <dbReference type="ChEBI" id="CHEBI:57692"/>
    </ligand>
</feature>
<feature type="binding site" evidence="1">
    <location>
        <position position="33"/>
    </location>
    <ligand>
        <name>FAD</name>
        <dbReference type="ChEBI" id="CHEBI:57692"/>
    </ligand>
</feature>
<feature type="binding site" evidence="1">
    <location>
        <position position="41"/>
    </location>
    <ligand>
        <name>FAD</name>
        <dbReference type="ChEBI" id="CHEBI:57692"/>
    </ligand>
</feature>
<feature type="binding site" evidence="1">
    <location>
        <position position="46"/>
    </location>
    <ligand>
        <name>FAD</name>
        <dbReference type="ChEBI" id="CHEBI:57692"/>
    </ligand>
</feature>
<feature type="binding site" evidence="1">
    <location>
        <position position="86"/>
    </location>
    <ligand>
        <name>FAD</name>
        <dbReference type="ChEBI" id="CHEBI:57692"/>
    </ligand>
</feature>
<feature type="binding site" evidence="1">
    <location>
        <position position="121"/>
    </location>
    <ligand>
        <name>FAD</name>
        <dbReference type="ChEBI" id="CHEBI:57692"/>
    </ligand>
</feature>
<feature type="binding site" evidence="1">
    <location>
        <position position="286"/>
    </location>
    <ligand>
        <name>FAD</name>
        <dbReference type="ChEBI" id="CHEBI:57692"/>
    </ligand>
</feature>
<feature type="binding site" evidence="1">
    <location>
        <position position="327"/>
    </location>
    <ligand>
        <name>FAD</name>
        <dbReference type="ChEBI" id="CHEBI:57692"/>
    </ligand>
</feature>
<gene>
    <name type="ordered locus">Fjoh_1507</name>
</gene>
<evidence type="ECO:0000255" key="1">
    <source>
        <dbReference type="HAMAP-Rule" id="MF_01685"/>
    </source>
</evidence>
<evidence type="ECO:0000305" key="2"/>
<accession>A5FJT9</accession>
<keyword id="KW-0274">FAD</keyword>
<keyword id="KW-0285">Flavoprotein</keyword>
<keyword id="KW-0521">NADP</keyword>
<keyword id="KW-0560">Oxidoreductase</keyword>